<gene>
    <name type="primary">yscU</name>
    <name type="ordered locus">YPCD1.47</name>
    <name type="ordered locus">y5031</name>
    <name type="ordered locus">y0034</name>
    <name type="ordered locus">YP_pCD36</name>
</gene>
<protein>
    <recommendedName>
        <fullName>Yop proteins translocation protein U</fullName>
    </recommendedName>
</protein>
<geneLocation type="plasmid">
    <name>pCD1</name>
</geneLocation>
<feature type="chain" id="PRO_0000180961" description="Yop proteins translocation protein U">
    <location>
        <begin position="1"/>
        <end position="354"/>
    </location>
</feature>
<feature type="transmembrane region" description="Helical" evidence="2">
    <location>
        <begin position="30"/>
        <end position="50"/>
    </location>
</feature>
<feature type="transmembrane region" description="Helical" evidence="2">
    <location>
        <begin position="79"/>
        <end position="99"/>
    </location>
</feature>
<feature type="transmembrane region" description="Helical" evidence="2">
    <location>
        <begin position="138"/>
        <end position="158"/>
    </location>
</feature>
<feature type="transmembrane region" description="Helical" evidence="2">
    <location>
        <begin position="163"/>
        <end position="183"/>
    </location>
</feature>
<feature type="transmembrane region" description="Helical" evidence="2">
    <location>
        <begin position="187"/>
        <end position="207"/>
    </location>
</feature>
<feature type="region of interest" description="Disordered" evidence="3">
    <location>
        <begin position="1"/>
        <end position="20"/>
    </location>
</feature>
<feature type="helix" evidence="5">
    <location>
        <begin position="241"/>
        <end position="255"/>
    </location>
</feature>
<feature type="strand" evidence="5">
    <location>
        <begin position="258"/>
        <end position="263"/>
    </location>
</feature>
<feature type="strand" evidence="5">
    <location>
        <begin position="266"/>
        <end position="272"/>
    </location>
</feature>
<feature type="turn" evidence="5">
    <location>
        <begin position="275"/>
        <end position="277"/>
    </location>
</feature>
<feature type="strand" evidence="5">
    <location>
        <begin position="282"/>
        <end position="288"/>
    </location>
</feature>
<feature type="helix" evidence="5">
    <location>
        <begin position="291"/>
        <end position="302"/>
    </location>
</feature>
<feature type="strand" evidence="5">
    <location>
        <begin position="306"/>
        <end position="308"/>
    </location>
</feature>
<feature type="helix" evidence="5">
    <location>
        <begin position="310"/>
        <end position="319"/>
    </location>
</feature>
<feature type="helix" evidence="5">
    <location>
        <begin position="328"/>
        <end position="330"/>
    </location>
</feature>
<feature type="helix" evidence="5">
    <location>
        <begin position="331"/>
        <end position="338"/>
    </location>
</feature>
<accession>P69986</accession>
<accession>P40300</accession>
<accession>Q663J2</accession>
<organism>
    <name type="scientific">Yersinia pestis</name>
    <dbReference type="NCBI Taxonomy" id="632"/>
    <lineage>
        <taxon>Bacteria</taxon>
        <taxon>Pseudomonadati</taxon>
        <taxon>Pseudomonadota</taxon>
        <taxon>Gammaproteobacteria</taxon>
        <taxon>Enterobacterales</taxon>
        <taxon>Yersiniaceae</taxon>
        <taxon>Yersinia</taxon>
    </lineage>
</organism>
<dbReference type="EMBL" id="AF074612">
    <property type="protein sequence ID" value="AAC69784.1"/>
    <property type="molecule type" value="Genomic_DNA"/>
</dbReference>
<dbReference type="EMBL" id="AF053946">
    <property type="protein sequence ID" value="AAC62556.1"/>
    <property type="molecule type" value="Genomic_DNA"/>
</dbReference>
<dbReference type="EMBL" id="AL117189">
    <property type="protein sequence ID" value="CAB54924.1"/>
    <property type="molecule type" value="Genomic_DNA"/>
</dbReference>
<dbReference type="EMBL" id="AE017043">
    <property type="protein sequence ID" value="AAS58555.1"/>
    <property type="molecule type" value="Genomic_DNA"/>
</dbReference>
<dbReference type="PIR" id="T43578">
    <property type="entry name" value="T43578"/>
</dbReference>
<dbReference type="RefSeq" id="NP_395181.1">
    <property type="nucleotide sequence ID" value="NC_003131.1"/>
</dbReference>
<dbReference type="RefSeq" id="NP_857735.1">
    <property type="nucleotide sequence ID" value="NC_004836.1"/>
</dbReference>
<dbReference type="RefSeq" id="NP_857930.1">
    <property type="nucleotide sequence ID" value="NC_004839.1"/>
</dbReference>
<dbReference type="RefSeq" id="WP_002212936.1">
    <property type="nucleotide sequence ID" value="NZ_WUCM01000070.1"/>
</dbReference>
<dbReference type="PDB" id="2JLH">
    <property type="method" value="X-ray"/>
    <property type="resolution" value="1.53 A"/>
    <property type="chains" value="A=211-354"/>
</dbReference>
<dbReference type="PDB" id="2JLI">
    <property type="method" value="X-ray"/>
    <property type="resolution" value="1.13 A"/>
    <property type="chains" value="A=220-342"/>
</dbReference>
<dbReference type="PDB" id="2JLJ">
    <property type="method" value="X-ray"/>
    <property type="resolution" value="1.30 A"/>
    <property type="chains" value="A=211-354"/>
</dbReference>
<dbReference type="PDBsum" id="2JLH"/>
<dbReference type="PDBsum" id="2JLI"/>
<dbReference type="PDBsum" id="2JLJ"/>
<dbReference type="BMRB" id="P69986"/>
<dbReference type="SMR" id="P69986"/>
<dbReference type="IntAct" id="P69986">
    <property type="interactions" value="3"/>
</dbReference>
<dbReference type="MINT" id="P69986"/>
<dbReference type="MEROPS" id="N06.001"/>
<dbReference type="PaxDb" id="214092-5832467"/>
<dbReference type="DNASU" id="1149294"/>
<dbReference type="EnsemblBacteria" id="AAS58555">
    <property type="protein sequence ID" value="AAS58555"/>
    <property type="gene ID" value="YP_pCD36"/>
</dbReference>
<dbReference type="KEGG" id="ype:YPCD1.47"/>
<dbReference type="KEGG" id="ypm:YP_pCD36"/>
<dbReference type="PATRIC" id="fig|214092.21.peg.58"/>
<dbReference type="eggNOG" id="COG4792">
    <property type="taxonomic scope" value="Bacteria"/>
</dbReference>
<dbReference type="HOGENOM" id="CLU_041013_1_3_6"/>
<dbReference type="OMA" id="YYMSHIS"/>
<dbReference type="OrthoDB" id="9807950at2"/>
<dbReference type="EvolutionaryTrace" id="P69986"/>
<dbReference type="Proteomes" id="UP000000815">
    <property type="component" value="Plasmid pCD1"/>
</dbReference>
<dbReference type="Proteomes" id="UP000001019">
    <property type="component" value="Plasmid pCD1"/>
</dbReference>
<dbReference type="GO" id="GO:0005886">
    <property type="term" value="C:plasma membrane"/>
    <property type="evidence" value="ECO:0000318"/>
    <property type="project" value="GO_Central"/>
</dbReference>
<dbReference type="GO" id="GO:0009306">
    <property type="term" value="P:protein secretion"/>
    <property type="evidence" value="ECO:0007669"/>
    <property type="project" value="InterPro"/>
</dbReference>
<dbReference type="FunFam" id="3.40.1690.10:FF:000007">
    <property type="entry name" value="Type III secretion appartus protein YscU"/>
    <property type="match status" value="1"/>
</dbReference>
<dbReference type="Gene3D" id="3.40.1690.10">
    <property type="entry name" value="secretion proteins EscU"/>
    <property type="match status" value="1"/>
</dbReference>
<dbReference type="InterPro" id="IPR006307">
    <property type="entry name" value="BsaZ-like"/>
</dbReference>
<dbReference type="InterPro" id="IPR006135">
    <property type="entry name" value="T3SS_substrate_exporter"/>
</dbReference>
<dbReference type="InterPro" id="IPR029025">
    <property type="entry name" value="T3SS_substrate_exporter_C"/>
</dbReference>
<dbReference type="NCBIfam" id="TIGR01404">
    <property type="entry name" value="FlhB_rel_III"/>
    <property type="match status" value="1"/>
</dbReference>
<dbReference type="PANTHER" id="PTHR30531">
    <property type="entry name" value="FLAGELLAR BIOSYNTHETIC PROTEIN FLHB"/>
    <property type="match status" value="1"/>
</dbReference>
<dbReference type="PANTHER" id="PTHR30531:SF14">
    <property type="entry name" value="SURFACE PRESENTATION OF ANTIGENS PROTEIN SPAS"/>
    <property type="match status" value="1"/>
</dbReference>
<dbReference type="Pfam" id="PF01312">
    <property type="entry name" value="Bac_export_2"/>
    <property type="match status" value="1"/>
</dbReference>
<dbReference type="PRINTS" id="PR00950">
    <property type="entry name" value="TYPE3IMSPROT"/>
</dbReference>
<dbReference type="SUPFAM" id="SSF160544">
    <property type="entry name" value="EscU C-terminal domain-like"/>
    <property type="match status" value="1"/>
</dbReference>
<proteinExistence type="evidence at protein level"/>
<evidence type="ECO:0000250" key="1"/>
<evidence type="ECO:0000255" key="2"/>
<evidence type="ECO:0000256" key="3">
    <source>
        <dbReference type="SAM" id="MobiDB-lite"/>
    </source>
</evidence>
<evidence type="ECO:0000305" key="4"/>
<evidence type="ECO:0007829" key="5">
    <source>
        <dbReference type="PDB" id="2JLI"/>
    </source>
</evidence>
<comment type="function">
    <text evidence="1">Component of the yop secretion machinery.</text>
</comment>
<comment type="subcellular location">
    <subcellularLocation>
        <location evidence="4">Cell membrane</location>
        <topology evidence="4">Multi-pass membrane protein</topology>
    </subcellularLocation>
</comment>
<comment type="similarity">
    <text evidence="4">Belongs to the type III secretion exporter family.</text>
</comment>
<name>YSCU_YERPE</name>
<reference key="1">
    <citation type="journal article" date="1998" name="Infect. Immun.">
        <title>DNA sequencing and analysis of the low-Ca2+-response plasmid pCD1 of Yersinia pestis KIM5.</title>
        <authorList>
            <person name="Perry R.D."/>
            <person name="Straley S.C."/>
            <person name="Fetherston J.D."/>
            <person name="Rose D.J."/>
            <person name="Gregor J."/>
            <person name="Blattner F.R."/>
        </authorList>
    </citation>
    <scope>NUCLEOTIDE SEQUENCE [GENOMIC DNA]</scope>
    <source>
        <strain>KIM5 / Biovar Mediaevalis</strain>
    </source>
</reference>
<reference key="2">
    <citation type="journal article" date="1998" name="J. Bacteriol.">
        <title>Structural organization of virulence-associated plasmids of Yersinia pestis.</title>
        <authorList>
            <person name="Hu P."/>
            <person name="Elliott J."/>
            <person name="McCready P."/>
            <person name="Skowronski E."/>
            <person name="Garnes J."/>
            <person name="Kobayashi A."/>
            <person name="Brubaker R.R."/>
            <person name="Garcia E."/>
        </authorList>
    </citation>
    <scope>NUCLEOTIDE SEQUENCE [GENOMIC DNA]</scope>
    <source>
        <strain>KIM5 / Biovar Mediaevalis</strain>
    </source>
</reference>
<reference key="3">
    <citation type="journal article" date="2001" name="Nature">
        <title>Genome sequence of Yersinia pestis, the causative agent of plague.</title>
        <authorList>
            <person name="Parkhill J."/>
            <person name="Wren B.W."/>
            <person name="Thomson N.R."/>
            <person name="Titball R.W."/>
            <person name="Holden M.T.G."/>
            <person name="Prentice M.B."/>
            <person name="Sebaihia M."/>
            <person name="James K.D."/>
            <person name="Churcher C.M."/>
            <person name="Mungall K.L."/>
            <person name="Baker S."/>
            <person name="Basham D."/>
            <person name="Bentley S.D."/>
            <person name="Brooks K."/>
            <person name="Cerdeno-Tarraga A.-M."/>
            <person name="Chillingworth T."/>
            <person name="Cronin A."/>
            <person name="Davies R.M."/>
            <person name="Davis P."/>
            <person name="Dougan G."/>
            <person name="Feltwell T."/>
            <person name="Hamlin N."/>
            <person name="Holroyd S."/>
            <person name="Jagels K."/>
            <person name="Karlyshev A.V."/>
            <person name="Leather S."/>
            <person name="Moule S."/>
            <person name="Oyston P.C.F."/>
            <person name="Quail M.A."/>
            <person name="Rutherford K.M."/>
            <person name="Simmonds M."/>
            <person name="Skelton J."/>
            <person name="Stevens K."/>
            <person name="Whitehead S."/>
            <person name="Barrell B.G."/>
        </authorList>
    </citation>
    <scope>NUCLEOTIDE SEQUENCE [LARGE SCALE GENOMIC DNA]</scope>
    <source>
        <strain>CO-92 / Biovar Orientalis</strain>
    </source>
</reference>
<reference key="4">
    <citation type="journal article" date="2004" name="DNA Res.">
        <title>Complete genome sequence of Yersinia pestis strain 91001, an isolate avirulent to humans.</title>
        <authorList>
            <person name="Song Y."/>
            <person name="Tong Z."/>
            <person name="Wang J."/>
            <person name="Wang L."/>
            <person name="Guo Z."/>
            <person name="Han Y."/>
            <person name="Zhang J."/>
            <person name="Pei D."/>
            <person name="Zhou D."/>
            <person name="Qin H."/>
            <person name="Pang X."/>
            <person name="Han Y."/>
            <person name="Zhai J."/>
            <person name="Li M."/>
            <person name="Cui B."/>
            <person name="Qi Z."/>
            <person name="Jin L."/>
            <person name="Dai R."/>
            <person name="Chen F."/>
            <person name="Li S."/>
            <person name="Ye C."/>
            <person name="Du Z."/>
            <person name="Lin W."/>
            <person name="Wang J."/>
            <person name="Yu J."/>
            <person name="Yang H."/>
            <person name="Wang J."/>
            <person name="Huang P."/>
            <person name="Yang R."/>
        </authorList>
    </citation>
    <scope>NUCLEOTIDE SEQUENCE [LARGE SCALE GENOMIC DNA]</scope>
    <source>
        <strain>91001 / Biovar Mediaevalis</strain>
    </source>
</reference>
<keyword id="KW-0002">3D-structure</keyword>
<keyword id="KW-1003">Cell membrane</keyword>
<keyword id="KW-0472">Membrane</keyword>
<keyword id="KW-0614">Plasmid</keyword>
<keyword id="KW-0653">Protein transport</keyword>
<keyword id="KW-1185">Reference proteome</keyword>
<keyword id="KW-0812">Transmembrane</keyword>
<keyword id="KW-1133">Transmembrane helix</keyword>
<keyword id="KW-0813">Transport</keyword>
<keyword id="KW-0843">Virulence</keyword>
<sequence>MSGEKTEQPTPKKIRDARKKGQVAKSKEVVSTALIVALSAMLMGLSDYYFEHFSKLMLIPAEQSYLPFSQALSYVVDNVLLEFFYLCFPLLTVAALMAIASHVVQYGFLISGEAIKPDIKKINPIEGAKRIFSIKSLVEFLKSILKVVLLSILIWIIIKGNLVTLLQLPTCGIECITPLLGQILRQLMVICTVGFVVISIADYAFEYYQYIKELKMSKDEIKREYKEMEGSPEIKSKRRQFHQEIQSRNMRENVKRSSVVVANPTHIAIGILYKRGETPLPLVTFKYTDAQVQTVRKIAEEEGVPILQRIPLARALYWDALVDHYIPAEQIEATAEVLRWLERQNIEKQHSEML</sequence>